<comment type="function">
    <text evidence="1">Catalyzes the transfer of a dimethylallyl group onto the adenine at position 37 in tRNAs that read codons beginning with uridine, leading to the formation of N6-(dimethylallyl)adenosine (i(6)A).</text>
</comment>
<comment type="catalytic activity">
    <reaction evidence="1">
        <text>adenosine(37) in tRNA + dimethylallyl diphosphate = N(6)-dimethylallyladenosine(37) in tRNA + diphosphate</text>
        <dbReference type="Rhea" id="RHEA:26482"/>
        <dbReference type="Rhea" id="RHEA-COMP:10162"/>
        <dbReference type="Rhea" id="RHEA-COMP:10375"/>
        <dbReference type="ChEBI" id="CHEBI:33019"/>
        <dbReference type="ChEBI" id="CHEBI:57623"/>
        <dbReference type="ChEBI" id="CHEBI:74411"/>
        <dbReference type="ChEBI" id="CHEBI:74415"/>
        <dbReference type="EC" id="2.5.1.75"/>
    </reaction>
</comment>
<comment type="cofactor">
    <cofactor evidence="1">
        <name>Mg(2+)</name>
        <dbReference type="ChEBI" id="CHEBI:18420"/>
    </cofactor>
</comment>
<comment type="subunit">
    <text evidence="1">Monomer.</text>
</comment>
<comment type="similarity">
    <text evidence="1">Belongs to the IPP transferase family.</text>
</comment>
<accession>B5ZVU9</accession>
<reference key="1">
    <citation type="journal article" date="2010" name="Stand. Genomic Sci.">
        <title>Complete genome sequence of Rhizobium leguminosarum bv trifolii strain WSM2304, an effective microsymbiont of the South American clover Trifolium polymorphum.</title>
        <authorList>
            <person name="Reeve W."/>
            <person name="O'Hara G."/>
            <person name="Chain P."/>
            <person name="Ardley J."/>
            <person name="Brau L."/>
            <person name="Nandesena K."/>
            <person name="Tiwari R."/>
            <person name="Malfatti S."/>
            <person name="Kiss H."/>
            <person name="Lapidus A."/>
            <person name="Copeland A."/>
            <person name="Nolan M."/>
            <person name="Land M."/>
            <person name="Ivanova N."/>
            <person name="Mavromatis K."/>
            <person name="Markowitz V."/>
            <person name="Kyrpides N."/>
            <person name="Melino V."/>
            <person name="Denton M."/>
            <person name="Yates R."/>
            <person name="Howieson J."/>
        </authorList>
    </citation>
    <scope>NUCLEOTIDE SEQUENCE [LARGE SCALE GENOMIC DNA]</scope>
    <source>
        <strain>WSM2304</strain>
    </source>
</reference>
<gene>
    <name evidence="1" type="primary">miaA</name>
    <name type="ordered locus">Rleg2_2537</name>
</gene>
<dbReference type="EC" id="2.5.1.75" evidence="1"/>
<dbReference type="EMBL" id="CP001191">
    <property type="protein sequence ID" value="ACI55810.1"/>
    <property type="molecule type" value="Genomic_DNA"/>
</dbReference>
<dbReference type="SMR" id="B5ZVU9"/>
<dbReference type="STRING" id="395492.Rleg2_2537"/>
<dbReference type="KEGG" id="rlt:Rleg2_2537"/>
<dbReference type="eggNOG" id="COG0324">
    <property type="taxonomic scope" value="Bacteria"/>
</dbReference>
<dbReference type="HOGENOM" id="CLU_032616_0_1_5"/>
<dbReference type="Proteomes" id="UP000008330">
    <property type="component" value="Chromosome"/>
</dbReference>
<dbReference type="GO" id="GO:0005524">
    <property type="term" value="F:ATP binding"/>
    <property type="evidence" value="ECO:0007669"/>
    <property type="project" value="UniProtKB-UniRule"/>
</dbReference>
<dbReference type="GO" id="GO:0052381">
    <property type="term" value="F:tRNA dimethylallyltransferase activity"/>
    <property type="evidence" value="ECO:0007669"/>
    <property type="project" value="UniProtKB-UniRule"/>
</dbReference>
<dbReference type="GO" id="GO:0006400">
    <property type="term" value="P:tRNA modification"/>
    <property type="evidence" value="ECO:0007669"/>
    <property type="project" value="TreeGrafter"/>
</dbReference>
<dbReference type="Gene3D" id="1.10.20.140">
    <property type="match status" value="1"/>
</dbReference>
<dbReference type="Gene3D" id="3.40.50.300">
    <property type="entry name" value="P-loop containing nucleotide triphosphate hydrolases"/>
    <property type="match status" value="1"/>
</dbReference>
<dbReference type="HAMAP" id="MF_00185">
    <property type="entry name" value="IPP_trans"/>
    <property type="match status" value="1"/>
</dbReference>
<dbReference type="InterPro" id="IPR039657">
    <property type="entry name" value="Dimethylallyltransferase"/>
</dbReference>
<dbReference type="InterPro" id="IPR018022">
    <property type="entry name" value="IPT"/>
</dbReference>
<dbReference type="InterPro" id="IPR027417">
    <property type="entry name" value="P-loop_NTPase"/>
</dbReference>
<dbReference type="NCBIfam" id="TIGR00174">
    <property type="entry name" value="miaA"/>
    <property type="match status" value="1"/>
</dbReference>
<dbReference type="PANTHER" id="PTHR11088">
    <property type="entry name" value="TRNA DIMETHYLALLYLTRANSFERASE"/>
    <property type="match status" value="1"/>
</dbReference>
<dbReference type="PANTHER" id="PTHR11088:SF60">
    <property type="entry name" value="TRNA DIMETHYLALLYLTRANSFERASE"/>
    <property type="match status" value="1"/>
</dbReference>
<dbReference type="Pfam" id="PF01715">
    <property type="entry name" value="IPPT"/>
    <property type="match status" value="1"/>
</dbReference>
<dbReference type="SUPFAM" id="SSF52540">
    <property type="entry name" value="P-loop containing nucleoside triphosphate hydrolases"/>
    <property type="match status" value="2"/>
</dbReference>
<name>MIAA_RHILW</name>
<keyword id="KW-0067">ATP-binding</keyword>
<keyword id="KW-0460">Magnesium</keyword>
<keyword id="KW-0547">Nucleotide-binding</keyword>
<keyword id="KW-1185">Reference proteome</keyword>
<keyword id="KW-0808">Transferase</keyword>
<keyword id="KW-0819">tRNA processing</keyword>
<evidence type="ECO:0000255" key="1">
    <source>
        <dbReference type="HAMAP-Rule" id="MF_00185"/>
    </source>
</evidence>
<feature type="chain" id="PRO_0000377281" description="tRNA dimethylallyltransferase">
    <location>
        <begin position="1"/>
        <end position="297"/>
    </location>
</feature>
<feature type="region of interest" description="Interaction with substrate tRNA" evidence="1">
    <location>
        <begin position="40"/>
        <end position="43"/>
    </location>
</feature>
<feature type="region of interest" description="Interaction with substrate tRNA" evidence="1">
    <location>
        <begin position="164"/>
        <end position="168"/>
    </location>
</feature>
<feature type="binding site" evidence="1">
    <location>
        <begin position="15"/>
        <end position="22"/>
    </location>
    <ligand>
        <name>ATP</name>
        <dbReference type="ChEBI" id="CHEBI:30616"/>
    </ligand>
</feature>
<feature type="binding site" evidence="1">
    <location>
        <begin position="17"/>
        <end position="22"/>
    </location>
    <ligand>
        <name>substrate</name>
    </ligand>
</feature>
<feature type="site" description="Interaction with substrate tRNA" evidence="1">
    <location>
        <position position="106"/>
    </location>
</feature>
<feature type="site" description="Interaction with substrate tRNA" evidence="1">
    <location>
        <position position="128"/>
    </location>
</feature>
<organism>
    <name type="scientific">Rhizobium leguminosarum bv. trifolii (strain WSM2304)</name>
    <dbReference type="NCBI Taxonomy" id="395492"/>
    <lineage>
        <taxon>Bacteria</taxon>
        <taxon>Pseudomonadati</taxon>
        <taxon>Pseudomonadota</taxon>
        <taxon>Alphaproteobacteria</taxon>
        <taxon>Hyphomicrobiales</taxon>
        <taxon>Rhizobiaceae</taxon>
        <taxon>Rhizobium/Agrobacterium group</taxon>
        <taxon>Rhizobium</taxon>
    </lineage>
</organism>
<protein>
    <recommendedName>
        <fullName evidence="1">tRNA dimethylallyltransferase</fullName>
        <ecNumber evidence="1">2.5.1.75</ecNumber>
    </recommendedName>
    <alternativeName>
        <fullName evidence="1">Dimethylallyl diphosphate:tRNA dimethylallyltransferase</fullName>
        <shortName evidence="1">DMAPP:tRNA dimethylallyltransferase</shortName>
        <shortName evidence="1">DMATase</shortName>
    </alternativeName>
    <alternativeName>
        <fullName evidence="1">Isopentenyl-diphosphate:tRNA isopentenyltransferase</fullName>
        <shortName evidence="1">IPP transferase</shortName>
        <shortName evidence="1">IPPT</shortName>
        <shortName evidence="1">IPTase</shortName>
    </alternativeName>
</protein>
<proteinExistence type="inferred from homology"/>
<sequence length="297" mass="32063">MENLLSTVNAILITGPTASGKSALAVELAKRHGGAVVNADSMQVYDTLRVLTARPSEVEMQGVPHHLYGHVPAGAAYSTGAWLRDVSALLPALRAAGQLPVFVGGTGLYFKALTGGLSDMPDIPEALREELRGRLLMEGPDRLHAELAEVDPAMAAGLNRQDGQRIVRALEVVKATGRSIADFQGQSGPVVIDAAQARKIVVLPERAVLHARINGRFEKMLRERAEDEVRALLALGLPAEAPVMKAIGVSQMAAMLSGEMTRDDVLEKGAAATRQYAKRQMTWFRNQMDESWERLTL</sequence>